<reference key="1">
    <citation type="journal article" date="2001" name="Science">
        <title>The genome of the natural genetic engineer Agrobacterium tumefaciens C58.</title>
        <authorList>
            <person name="Wood D.W."/>
            <person name="Setubal J.C."/>
            <person name="Kaul R."/>
            <person name="Monks D.E."/>
            <person name="Kitajima J.P."/>
            <person name="Okura V.K."/>
            <person name="Zhou Y."/>
            <person name="Chen L."/>
            <person name="Wood G.E."/>
            <person name="Almeida N.F. Jr."/>
            <person name="Woo L."/>
            <person name="Chen Y."/>
            <person name="Paulsen I.T."/>
            <person name="Eisen J.A."/>
            <person name="Karp P.D."/>
            <person name="Bovee D. Sr."/>
            <person name="Chapman P."/>
            <person name="Clendenning J."/>
            <person name="Deatherage G."/>
            <person name="Gillet W."/>
            <person name="Grant C."/>
            <person name="Kutyavin T."/>
            <person name="Levy R."/>
            <person name="Li M.-J."/>
            <person name="McClelland E."/>
            <person name="Palmieri A."/>
            <person name="Raymond C."/>
            <person name="Rouse G."/>
            <person name="Saenphimmachak C."/>
            <person name="Wu Z."/>
            <person name="Romero P."/>
            <person name="Gordon D."/>
            <person name="Zhang S."/>
            <person name="Yoo H."/>
            <person name="Tao Y."/>
            <person name="Biddle P."/>
            <person name="Jung M."/>
            <person name="Krespan W."/>
            <person name="Perry M."/>
            <person name="Gordon-Kamm B."/>
            <person name="Liao L."/>
            <person name="Kim S."/>
            <person name="Hendrick C."/>
            <person name="Zhao Z.-Y."/>
            <person name="Dolan M."/>
            <person name="Chumley F."/>
            <person name="Tingey S.V."/>
            <person name="Tomb J.-F."/>
            <person name="Gordon M.P."/>
            <person name="Olson M.V."/>
            <person name="Nester E.W."/>
        </authorList>
    </citation>
    <scope>NUCLEOTIDE SEQUENCE [LARGE SCALE GENOMIC DNA]</scope>
    <source>
        <strain>C58 / ATCC 33970</strain>
    </source>
</reference>
<reference key="2">
    <citation type="journal article" date="2001" name="Science">
        <title>Genome sequence of the plant pathogen and biotechnology agent Agrobacterium tumefaciens C58.</title>
        <authorList>
            <person name="Goodner B."/>
            <person name="Hinkle G."/>
            <person name="Gattung S."/>
            <person name="Miller N."/>
            <person name="Blanchard M."/>
            <person name="Qurollo B."/>
            <person name="Goldman B.S."/>
            <person name="Cao Y."/>
            <person name="Askenazi M."/>
            <person name="Halling C."/>
            <person name="Mullin L."/>
            <person name="Houmiel K."/>
            <person name="Gordon J."/>
            <person name="Vaudin M."/>
            <person name="Iartchouk O."/>
            <person name="Epp A."/>
            <person name="Liu F."/>
            <person name="Wollam C."/>
            <person name="Allinger M."/>
            <person name="Doughty D."/>
            <person name="Scott C."/>
            <person name="Lappas C."/>
            <person name="Markelz B."/>
            <person name="Flanagan C."/>
            <person name="Crowell C."/>
            <person name="Gurson J."/>
            <person name="Lomo C."/>
            <person name="Sear C."/>
            <person name="Strub G."/>
            <person name="Cielo C."/>
            <person name="Slater S."/>
        </authorList>
    </citation>
    <scope>NUCLEOTIDE SEQUENCE [LARGE SCALE GENOMIC DNA]</scope>
    <source>
        <strain>C58 / ATCC 33970</strain>
    </source>
</reference>
<name>DDL_AGRFC</name>
<protein>
    <recommendedName>
        <fullName evidence="2">D-alanine--D-alanine ligase</fullName>
        <ecNumber evidence="2">6.3.2.4</ecNumber>
    </recommendedName>
    <alternativeName>
        <fullName evidence="2">D-Ala-D-Ala ligase</fullName>
    </alternativeName>
    <alternativeName>
        <fullName evidence="2">D-alanylalanine synthetase</fullName>
    </alternativeName>
</protein>
<sequence>MGGKHVAVLLGGFSSERPVSLSSGNACALALEGEGYKVTRVDVGRDVAAVLDELRPDVAFNALHGPFGEDGTIQGILEYLAIPYTHSGVLASALAMDKAQAKKVAAAAGIPVAGERVMNRFDFTSEHPLQPPYVVKPVREGSSFGVVIVKEDQSHPPQILTSSEWPFGNQVMVERYIHGRELTCGVLDGEALGVTEVVPLGHNFYDYDAKYAAGGSKHVIPAGISPKIYQKIQTLAVMAHQAIGCRGVSRSDFRYDDRFSEDGEVIWLEVNTQPGMTPTSLVPEMAAHAGRSFGDLVSWMVEDASCLR</sequence>
<keyword id="KW-0067">ATP-binding</keyword>
<keyword id="KW-0133">Cell shape</keyword>
<keyword id="KW-0961">Cell wall biogenesis/degradation</keyword>
<keyword id="KW-0963">Cytoplasm</keyword>
<keyword id="KW-0436">Ligase</keyword>
<keyword id="KW-0460">Magnesium</keyword>
<keyword id="KW-0464">Manganese</keyword>
<keyword id="KW-0479">Metal-binding</keyword>
<keyword id="KW-0547">Nucleotide-binding</keyword>
<keyword id="KW-0573">Peptidoglycan synthesis</keyword>
<keyword id="KW-1185">Reference proteome</keyword>
<evidence type="ECO:0000250" key="1"/>
<evidence type="ECO:0000255" key="2">
    <source>
        <dbReference type="HAMAP-Rule" id="MF_00047"/>
    </source>
</evidence>
<organism>
    <name type="scientific">Agrobacterium fabrum (strain C58 / ATCC 33970)</name>
    <name type="common">Agrobacterium tumefaciens (strain C58)</name>
    <dbReference type="NCBI Taxonomy" id="176299"/>
    <lineage>
        <taxon>Bacteria</taxon>
        <taxon>Pseudomonadati</taxon>
        <taxon>Pseudomonadota</taxon>
        <taxon>Alphaproteobacteria</taxon>
        <taxon>Hyphomicrobiales</taxon>
        <taxon>Rhizobiaceae</taxon>
        <taxon>Rhizobium/Agrobacterium group</taxon>
        <taxon>Agrobacterium</taxon>
        <taxon>Agrobacterium tumefaciens complex</taxon>
    </lineage>
</organism>
<dbReference type="EC" id="6.3.2.4" evidence="2"/>
<dbReference type="EMBL" id="AE007869">
    <property type="protein sequence ID" value="AAK87839.2"/>
    <property type="molecule type" value="Genomic_DNA"/>
</dbReference>
<dbReference type="PIR" id="AB2833">
    <property type="entry name" value="AB2833"/>
</dbReference>
<dbReference type="PIR" id="F97610">
    <property type="entry name" value="F97610"/>
</dbReference>
<dbReference type="RefSeq" id="NP_355054.2">
    <property type="nucleotide sequence ID" value="NC_003062.2"/>
</dbReference>
<dbReference type="RefSeq" id="WP_010972048.1">
    <property type="nucleotide sequence ID" value="NC_003062.2"/>
</dbReference>
<dbReference type="SMR" id="Q8UDN3"/>
<dbReference type="STRING" id="176299.Atu2089"/>
<dbReference type="EnsemblBacteria" id="AAK87839">
    <property type="protein sequence ID" value="AAK87839"/>
    <property type="gene ID" value="Atu2089"/>
</dbReference>
<dbReference type="GeneID" id="1134127"/>
<dbReference type="KEGG" id="atu:Atu2089"/>
<dbReference type="PATRIC" id="fig|176299.10.peg.2102"/>
<dbReference type="eggNOG" id="COG1181">
    <property type="taxonomic scope" value="Bacteria"/>
</dbReference>
<dbReference type="HOGENOM" id="CLU_039268_1_1_5"/>
<dbReference type="OrthoDB" id="9813261at2"/>
<dbReference type="PhylomeDB" id="Q8UDN3"/>
<dbReference type="BioCyc" id="AGRO:ATU2089-MONOMER"/>
<dbReference type="UniPathway" id="UPA00219"/>
<dbReference type="Proteomes" id="UP000000813">
    <property type="component" value="Chromosome circular"/>
</dbReference>
<dbReference type="GO" id="GO:0005737">
    <property type="term" value="C:cytoplasm"/>
    <property type="evidence" value="ECO:0007669"/>
    <property type="project" value="UniProtKB-SubCell"/>
</dbReference>
<dbReference type="GO" id="GO:0005524">
    <property type="term" value="F:ATP binding"/>
    <property type="evidence" value="ECO:0007669"/>
    <property type="project" value="UniProtKB-KW"/>
</dbReference>
<dbReference type="GO" id="GO:0008716">
    <property type="term" value="F:D-alanine-D-alanine ligase activity"/>
    <property type="evidence" value="ECO:0007669"/>
    <property type="project" value="UniProtKB-UniRule"/>
</dbReference>
<dbReference type="GO" id="GO:0046872">
    <property type="term" value="F:metal ion binding"/>
    <property type="evidence" value="ECO:0007669"/>
    <property type="project" value="UniProtKB-KW"/>
</dbReference>
<dbReference type="GO" id="GO:0071555">
    <property type="term" value="P:cell wall organization"/>
    <property type="evidence" value="ECO:0007669"/>
    <property type="project" value="UniProtKB-KW"/>
</dbReference>
<dbReference type="GO" id="GO:0009252">
    <property type="term" value="P:peptidoglycan biosynthetic process"/>
    <property type="evidence" value="ECO:0007669"/>
    <property type="project" value="UniProtKB-UniRule"/>
</dbReference>
<dbReference type="GO" id="GO:0008360">
    <property type="term" value="P:regulation of cell shape"/>
    <property type="evidence" value="ECO:0007669"/>
    <property type="project" value="UniProtKB-KW"/>
</dbReference>
<dbReference type="Gene3D" id="3.40.50.20">
    <property type="match status" value="1"/>
</dbReference>
<dbReference type="Gene3D" id="3.30.1490.20">
    <property type="entry name" value="ATP-grasp fold, A domain"/>
    <property type="match status" value="1"/>
</dbReference>
<dbReference type="Gene3D" id="3.30.470.20">
    <property type="entry name" value="ATP-grasp fold, B domain"/>
    <property type="match status" value="1"/>
</dbReference>
<dbReference type="HAMAP" id="MF_00047">
    <property type="entry name" value="Dala_Dala_lig"/>
    <property type="match status" value="1"/>
</dbReference>
<dbReference type="InterPro" id="IPR011761">
    <property type="entry name" value="ATP-grasp"/>
</dbReference>
<dbReference type="InterPro" id="IPR013815">
    <property type="entry name" value="ATP_grasp_subdomain_1"/>
</dbReference>
<dbReference type="InterPro" id="IPR000291">
    <property type="entry name" value="D-Ala_lig_Van_CS"/>
</dbReference>
<dbReference type="InterPro" id="IPR005905">
    <property type="entry name" value="D_ala_D_ala"/>
</dbReference>
<dbReference type="InterPro" id="IPR011095">
    <property type="entry name" value="Dala_Dala_lig_C"/>
</dbReference>
<dbReference type="InterPro" id="IPR011127">
    <property type="entry name" value="Dala_Dala_lig_N"/>
</dbReference>
<dbReference type="InterPro" id="IPR016185">
    <property type="entry name" value="PreATP-grasp_dom_sf"/>
</dbReference>
<dbReference type="NCBIfam" id="TIGR01205">
    <property type="entry name" value="D_ala_D_alaTIGR"/>
    <property type="match status" value="1"/>
</dbReference>
<dbReference type="NCBIfam" id="NF002378">
    <property type="entry name" value="PRK01372.1"/>
    <property type="match status" value="1"/>
</dbReference>
<dbReference type="PANTHER" id="PTHR23132">
    <property type="entry name" value="D-ALANINE--D-ALANINE LIGASE"/>
    <property type="match status" value="1"/>
</dbReference>
<dbReference type="PANTHER" id="PTHR23132:SF23">
    <property type="entry name" value="D-ALANINE--D-ALANINE LIGASE B"/>
    <property type="match status" value="1"/>
</dbReference>
<dbReference type="Pfam" id="PF07478">
    <property type="entry name" value="Dala_Dala_lig_C"/>
    <property type="match status" value="1"/>
</dbReference>
<dbReference type="Pfam" id="PF01820">
    <property type="entry name" value="Dala_Dala_lig_N"/>
    <property type="match status" value="1"/>
</dbReference>
<dbReference type="PIRSF" id="PIRSF039102">
    <property type="entry name" value="Ddl/VanB"/>
    <property type="match status" value="1"/>
</dbReference>
<dbReference type="SUPFAM" id="SSF56059">
    <property type="entry name" value="Glutathione synthetase ATP-binding domain-like"/>
    <property type="match status" value="1"/>
</dbReference>
<dbReference type="SUPFAM" id="SSF52440">
    <property type="entry name" value="PreATP-grasp domain"/>
    <property type="match status" value="1"/>
</dbReference>
<dbReference type="PROSITE" id="PS50975">
    <property type="entry name" value="ATP_GRASP"/>
    <property type="match status" value="1"/>
</dbReference>
<dbReference type="PROSITE" id="PS00843">
    <property type="entry name" value="DALA_DALA_LIGASE_1"/>
    <property type="match status" value="1"/>
</dbReference>
<dbReference type="PROSITE" id="PS00844">
    <property type="entry name" value="DALA_DALA_LIGASE_2"/>
    <property type="match status" value="1"/>
</dbReference>
<comment type="function">
    <text evidence="2">Cell wall formation.</text>
</comment>
<comment type="catalytic activity">
    <reaction evidence="2">
        <text>2 D-alanine + ATP = D-alanyl-D-alanine + ADP + phosphate + H(+)</text>
        <dbReference type="Rhea" id="RHEA:11224"/>
        <dbReference type="ChEBI" id="CHEBI:15378"/>
        <dbReference type="ChEBI" id="CHEBI:30616"/>
        <dbReference type="ChEBI" id="CHEBI:43474"/>
        <dbReference type="ChEBI" id="CHEBI:57416"/>
        <dbReference type="ChEBI" id="CHEBI:57822"/>
        <dbReference type="ChEBI" id="CHEBI:456216"/>
        <dbReference type="EC" id="6.3.2.4"/>
    </reaction>
</comment>
<comment type="cofactor">
    <cofactor evidence="1">
        <name>Mg(2+)</name>
        <dbReference type="ChEBI" id="CHEBI:18420"/>
    </cofactor>
    <cofactor evidence="1">
        <name>Mn(2+)</name>
        <dbReference type="ChEBI" id="CHEBI:29035"/>
    </cofactor>
    <text evidence="1">Binds 2 magnesium or manganese ions per subunit.</text>
</comment>
<comment type="pathway">
    <text evidence="2">Cell wall biogenesis; peptidoglycan biosynthesis.</text>
</comment>
<comment type="subcellular location">
    <subcellularLocation>
        <location evidence="2">Cytoplasm</location>
    </subcellularLocation>
</comment>
<comment type="similarity">
    <text evidence="2">Belongs to the D-alanine--D-alanine ligase family.</text>
</comment>
<gene>
    <name evidence="2" type="primary">ddl</name>
    <name type="ordered locus">Atu2089</name>
    <name type="ORF">AGR_C_3788</name>
</gene>
<accession>Q8UDN3</accession>
<feature type="chain" id="PRO_0000177777" description="D-alanine--D-alanine ligase">
    <location>
        <begin position="1"/>
        <end position="308"/>
    </location>
</feature>
<feature type="domain" description="ATP-grasp" evidence="2">
    <location>
        <begin position="102"/>
        <end position="302"/>
    </location>
</feature>
<feature type="binding site" evidence="2">
    <location>
        <begin position="128"/>
        <end position="183"/>
    </location>
    <ligand>
        <name>ATP</name>
        <dbReference type="ChEBI" id="CHEBI:30616"/>
    </ligand>
</feature>
<feature type="binding site" evidence="2">
    <location>
        <position position="252"/>
    </location>
    <ligand>
        <name>Mg(2+)</name>
        <dbReference type="ChEBI" id="CHEBI:18420"/>
        <label>1</label>
    </ligand>
</feature>
<feature type="binding site" evidence="2">
    <location>
        <position position="269"/>
    </location>
    <ligand>
        <name>Mg(2+)</name>
        <dbReference type="ChEBI" id="CHEBI:18420"/>
        <label>1</label>
    </ligand>
</feature>
<feature type="binding site" evidence="2">
    <location>
        <position position="269"/>
    </location>
    <ligand>
        <name>Mg(2+)</name>
        <dbReference type="ChEBI" id="CHEBI:18420"/>
        <label>2</label>
    </ligand>
</feature>
<feature type="binding site" evidence="2">
    <location>
        <position position="271"/>
    </location>
    <ligand>
        <name>Mg(2+)</name>
        <dbReference type="ChEBI" id="CHEBI:18420"/>
        <label>2</label>
    </ligand>
</feature>
<proteinExistence type="inferred from homology"/>